<organism>
    <name type="scientific">Mycobacterium leprae (strain TN)</name>
    <dbReference type="NCBI Taxonomy" id="272631"/>
    <lineage>
        <taxon>Bacteria</taxon>
        <taxon>Bacillati</taxon>
        <taxon>Actinomycetota</taxon>
        <taxon>Actinomycetes</taxon>
        <taxon>Mycobacteriales</taxon>
        <taxon>Mycobacteriaceae</taxon>
        <taxon>Mycobacterium</taxon>
    </lineage>
</organism>
<gene>
    <name type="primary">kgd</name>
    <name type="ordered locus">ML1095</name>
</gene>
<protein>
    <recommendedName>
        <fullName>Multifunctional 2-oxoglutarate metabolism enzyme</fullName>
    </recommendedName>
    <alternativeName>
        <fullName>2-hydroxy-3-oxoadipate synthase</fullName>
        <shortName>HOA synthase</shortName>
        <shortName>HOAS</shortName>
        <ecNumber>2.2.1.5</ecNumber>
    </alternativeName>
    <alternativeName>
        <fullName>2-oxoglutarate carboxy-lyase</fullName>
    </alternativeName>
    <alternativeName>
        <fullName>2-oxoglutarate decarboxylase</fullName>
    </alternativeName>
    <alternativeName>
        <fullName>Alpha-ketoglutarate decarboxylase</fullName>
        <shortName>KG decarboxylase</shortName>
        <shortName>KGD</shortName>
        <ecNumber>4.1.1.71</ecNumber>
    </alternativeName>
    <alternativeName>
        <fullName>Alpha-ketoglutarate-glyoxylate carboligase</fullName>
    </alternativeName>
    <domain>
        <recommendedName>
            <fullName>2-oxoglutarate dehydrogenase E1 component</fullName>
            <shortName>ODH E1 component</shortName>
            <ecNumber>1.2.4.2</ecNumber>
        </recommendedName>
        <alternativeName>
            <fullName>Alpha-ketoglutarate dehydrogenase E1 component</fullName>
            <shortName>KDH E1 component</shortName>
        </alternativeName>
    </domain>
    <domain>
        <recommendedName>
            <fullName>Dihydrolipoyllysine-residue succinyltransferase component of 2-oxoglutarate dehydrogenase complex</fullName>
            <ecNumber>2.3.1.61</ecNumber>
        </recommendedName>
        <alternativeName>
            <fullName>2-oxoglutarate dehydrogenase complex E2 component</fullName>
            <shortName>ODH E2 component</shortName>
            <shortName>OGDC-E2</shortName>
        </alternativeName>
        <alternativeName>
            <fullName>Dihydrolipoamide succinyltransferase</fullName>
        </alternativeName>
    </domain>
</protein>
<name>KGD_MYCLE</name>
<dbReference type="EC" id="2.2.1.5"/>
<dbReference type="EC" id="4.1.1.71"/>
<dbReference type="EC" id="1.2.4.2"/>
<dbReference type="EC" id="2.3.1.61"/>
<dbReference type="EMBL" id="AL583920">
    <property type="protein sequence ID" value="CAC31476.1"/>
    <property type="status" value="ALT_INIT"/>
    <property type="molecule type" value="Genomic_DNA"/>
</dbReference>
<dbReference type="PIR" id="A87046">
    <property type="entry name" value="A87046"/>
</dbReference>
<dbReference type="RefSeq" id="NP_301802.2">
    <property type="nucleotide sequence ID" value="NC_002677.1"/>
</dbReference>
<dbReference type="RefSeq" id="WP_010908126.1">
    <property type="nucleotide sequence ID" value="NC_002677.1"/>
</dbReference>
<dbReference type="SMR" id="Q9CC97"/>
<dbReference type="STRING" id="272631.gene:17574921"/>
<dbReference type="KEGG" id="mle:ML1095"/>
<dbReference type="PATRIC" id="fig|272631.5.peg.1959"/>
<dbReference type="Leproma" id="ML1095"/>
<dbReference type="eggNOG" id="COG0508">
    <property type="taxonomic scope" value="Bacteria"/>
</dbReference>
<dbReference type="eggNOG" id="COG0567">
    <property type="taxonomic scope" value="Bacteria"/>
</dbReference>
<dbReference type="HOGENOM" id="CLU_004709_1_0_11"/>
<dbReference type="OrthoDB" id="9759785at2"/>
<dbReference type="UniPathway" id="UPA00223">
    <property type="reaction ID" value="UER00997"/>
</dbReference>
<dbReference type="UniPathway" id="UPA00223">
    <property type="reaction ID" value="UER01001"/>
</dbReference>
<dbReference type="Proteomes" id="UP000000806">
    <property type="component" value="Chromosome"/>
</dbReference>
<dbReference type="GO" id="GO:0005829">
    <property type="term" value="C:cytosol"/>
    <property type="evidence" value="ECO:0007669"/>
    <property type="project" value="TreeGrafter"/>
</dbReference>
<dbReference type="GO" id="GO:0045252">
    <property type="term" value="C:oxoglutarate dehydrogenase complex"/>
    <property type="evidence" value="ECO:0007669"/>
    <property type="project" value="TreeGrafter"/>
</dbReference>
<dbReference type="GO" id="GO:0050439">
    <property type="term" value="F:2-hydroxy-3-oxoadipate synthase activity"/>
    <property type="evidence" value="ECO:0007669"/>
    <property type="project" value="UniProtKB-EC"/>
</dbReference>
<dbReference type="GO" id="GO:0008683">
    <property type="term" value="F:2-oxoglutarate decarboxylase activity"/>
    <property type="evidence" value="ECO:0007669"/>
    <property type="project" value="UniProtKB-EC"/>
</dbReference>
<dbReference type="GO" id="GO:0004149">
    <property type="term" value="F:dihydrolipoyllysine-residue succinyltransferase activity"/>
    <property type="evidence" value="ECO:0007669"/>
    <property type="project" value="UniProtKB-EC"/>
</dbReference>
<dbReference type="GO" id="GO:0000287">
    <property type="term" value="F:magnesium ion binding"/>
    <property type="evidence" value="ECO:0007669"/>
    <property type="project" value="UniProtKB-ARBA"/>
</dbReference>
<dbReference type="GO" id="GO:0004591">
    <property type="term" value="F:oxoglutarate dehydrogenase (succinyl-transferring) activity"/>
    <property type="evidence" value="ECO:0007669"/>
    <property type="project" value="UniProtKB-EC"/>
</dbReference>
<dbReference type="GO" id="GO:0030976">
    <property type="term" value="F:thiamine pyrophosphate binding"/>
    <property type="evidence" value="ECO:0007669"/>
    <property type="project" value="InterPro"/>
</dbReference>
<dbReference type="GO" id="GO:0006099">
    <property type="term" value="P:tricarboxylic acid cycle"/>
    <property type="evidence" value="ECO:0007669"/>
    <property type="project" value="UniProtKB-UniPathway"/>
</dbReference>
<dbReference type="CDD" id="cd02016">
    <property type="entry name" value="TPP_E1_OGDC_like"/>
    <property type="match status" value="1"/>
</dbReference>
<dbReference type="FunFam" id="3.30.559.10:FF:000011">
    <property type="entry name" value="2-oxoglutarate dehydrogenase E1 component"/>
    <property type="match status" value="1"/>
</dbReference>
<dbReference type="FunFam" id="3.40.50.11610:FF:000002">
    <property type="entry name" value="2-oxoglutarate dehydrogenase E1 component"/>
    <property type="match status" value="1"/>
</dbReference>
<dbReference type="FunFam" id="3.40.50.970:FF:000018">
    <property type="entry name" value="2-oxoglutarate dehydrogenase E1 component"/>
    <property type="match status" value="1"/>
</dbReference>
<dbReference type="Gene3D" id="3.40.50.12470">
    <property type="match status" value="1"/>
</dbReference>
<dbReference type="Gene3D" id="3.40.50.970">
    <property type="match status" value="1"/>
</dbReference>
<dbReference type="Gene3D" id="3.30.559.10">
    <property type="entry name" value="Chloramphenicol acetyltransferase-like domain"/>
    <property type="match status" value="1"/>
</dbReference>
<dbReference type="Gene3D" id="3.40.50.11610">
    <property type="entry name" value="Multifunctional 2-oxoglutarate metabolism enzyme, C-terminal domain"/>
    <property type="match status" value="1"/>
</dbReference>
<dbReference type="Gene3D" id="1.10.287.1150">
    <property type="entry name" value="TPP helical domain"/>
    <property type="match status" value="1"/>
</dbReference>
<dbReference type="InterPro" id="IPR001078">
    <property type="entry name" value="2-oxoacid_DH_actylTfrase"/>
</dbReference>
<dbReference type="InterPro" id="IPR032106">
    <property type="entry name" value="2-oxogl_dehyd_N"/>
</dbReference>
<dbReference type="InterPro" id="IPR011603">
    <property type="entry name" value="2oxoglutarate_DH_E1"/>
</dbReference>
<dbReference type="InterPro" id="IPR023213">
    <property type="entry name" value="CAT-like_dom_sf"/>
</dbReference>
<dbReference type="InterPro" id="IPR001017">
    <property type="entry name" value="DH_E1"/>
</dbReference>
<dbReference type="InterPro" id="IPR042179">
    <property type="entry name" value="KGD_C_sf"/>
</dbReference>
<dbReference type="InterPro" id="IPR031717">
    <property type="entry name" value="ODO-1/KGD_C"/>
</dbReference>
<dbReference type="InterPro" id="IPR029061">
    <property type="entry name" value="THDP-binding"/>
</dbReference>
<dbReference type="InterPro" id="IPR005475">
    <property type="entry name" value="Transketolase-like_Pyr-bd"/>
</dbReference>
<dbReference type="NCBIfam" id="TIGR00239">
    <property type="entry name" value="2oxo_dh_E1"/>
    <property type="match status" value="1"/>
</dbReference>
<dbReference type="NCBIfam" id="NF006914">
    <property type="entry name" value="PRK09404.1"/>
    <property type="match status" value="1"/>
</dbReference>
<dbReference type="NCBIfam" id="NF008907">
    <property type="entry name" value="PRK12270.1"/>
    <property type="match status" value="1"/>
</dbReference>
<dbReference type="PANTHER" id="PTHR23152:SF4">
    <property type="entry name" value="2-OXOADIPATE DEHYDROGENASE COMPLEX COMPONENT E1"/>
    <property type="match status" value="1"/>
</dbReference>
<dbReference type="PANTHER" id="PTHR23152">
    <property type="entry name" value="2-OXOGLUTARATE DEHYDROGENASE"/>
    <property type="match status" value="1"/>
</dbReference>
<dbReference type="Pfam" id="PF00198">
    <property type="entry name" value="2-oxoacid_dh"/>
    <property type="match status" value="1"/>
</dbReference>
<dbReference type="Pfam" id="PF16078">
    <property type="entry name" value="2-oxogl_dehyd_N"/>
    <property type="match status" value="1"/>
</dbReference>
<dbReference type="Pfam" id="PF00676">
    <property type="entry name" value="E1_dh"/>
    <property type="match status" value="1"/>
</dbReference>
<dbReference type="Pfam" id="PF16870">
    <property type="entry name" value="OxoGdeHyase_C"/>
    <property type="match status" value="1"/>
</dbReference>
<dbReference type="Pfam" id="PF02779">
    <property type="entry name" value="Transket_pyr"/>
    <property type="match status" value="1"/>
</dbReference>
<dbReference type="PIRSF" id="PIRSF000157">
    <property type="entry name" value="Oxoglu_dh_E1"/>
    <property type="match status" value="1"/>
</dbReference>
<dbReference type="SMART" id="SM00861">
    <property type="entry name" value="Transket_pyr"/>
    <property type="match status" value="1"/>
</dbReference>
<dbReference type="SUPFAM" id="SSF52777">
    <property type="entry name" value="CoA-dependent acyltransferases"/>
    <property type="match status" value="1"/>
</dbReference>
<dbReference type="SUPFAM" id="SSF52518">
    <property type="entry name" value="Thiamin diphosphate-binding fold (THDP-binding)"/>
    <property type="match status" value="2"/>
</dbReference>
<evidence type="ECO:0000250" key="1"/>
<evidence type="ECO:0000250" key="2">
    <source>
        <dbReference type="UniProtKB" id="A0R2B1"/>
    </source>
</evidence>
<evidence type="ECO:0000255" key="3"/>
<evidence type="ECO:0000256" key="4">
    <source>
        <dbReference type="SAM" id="MobiDB-lite"/>
    </source>
</evidence>
<evidence type="ECO:0000305" key="5"/>
<accession>Q9CC97</accession>
<sequence>MANISSPFGQNEWLVEEMYRKFRDDPSSVDPSWHEFLVDYNPESTAEPVLTDPTSTDKQPSATPQAKPAAAADPVASRAKPATTPTVANGTAAGSAAAPAKTTTTPPIEGDELQVLRGAAAVVVKNMSASLDVPTATSVRAVPAKLMIDNRTVINNQLKRNRGGKISFTHLLGYALVQAVKKFPNINRHYAEIDGKPIAVTPAHTNLGLAIDLQGKDGKRSLVVAGIKRCEELRFAQFVTAYEDIVRRARDGKLTAEDFAGVTISLTNPGTIGTVHSVPRLMTGQGAIIGVGAMEYPAEFQGASAERIAELGIGKLITLTSTYDHRIIQGAESGDFLRTIHEMVLSDSFWDEIFRELSIPYLPVRWRTDNPDSIVDKNARVMELIAAYRNRGHLMADIDPLRLDNTRFRSHPDLDLLTHGLTLWDLDRVFKVNGFGGWKYKKLRDVLGLLRDAYCRHIGVEYTHILDPEQQEWLQQRVETKNVKPTVAEQKYILSKLNAAEAFETFLHTKYVGQKRFSLEGAESVIPMMDAAIDQCAKHGLDEVVIGMPHRGRLNVLANIVGKPYSQIFTEFEGNLNPTLAHSSGDVKYHLGATGLYLQMFGDNDIQVSLTANPSHLEAVDPVLEGLVRAKQDLLNKDTNGNQDEAFSVVPMMLHGDAAFAGQGVVAETLNLANLPGYRVGGTIHIIVNNQIGFTTAPEYSRSSEYCTDVAKMIGAPIFHVNGDDPEACVWVAKLAVDFRQRFKKDVVIDMLCYRRRGHNEGDDPSMTNPYMYDVVDTKRGARKSYTEALIGRGDISLKEAEDALRDYQGQLERVFNEVRDLEKHGVQPSESVESDQMIPAGLSTAVDKALLARIGDAFLAVPEGFTVHPRVQPVLEKRREMAYEGKIDWAFAELLALGSLVAEGKLVRLSGQDTKRGTFSQRHSVIIDRHTGEEFTPLQLLANNPDGSPTGGKFLVYNSPLSEYAAVGFEYGYTVGNPDAVVLWEAQFGDFVNGAQSIIDEFINSGEAKWGQLSTVVLLLPHGHEGQGPDHTSGRIERFLQLWAEGSMTFAVPSTPSNYFHLLRRHALDGIKRPLIVFTPKSMLRNKAAVSDIKDFTEIKFRSVLEEPTYEDSIDDRSKVTRVLLTCGKLYYELAARKIKDNRDDVAIVRIEQLAPLPRRRLGETLDRYENAKEFFWVQEEPANQGAWPRFGLELPELLPRLTGIKRISRRAMSAPSSGSSKVHAVEQQEILDTAFG</sequence>
<reference key="1">
    <citation type="journal article" date="2001" name="Nature">
        <title>Massive gene decay in the leprosy bacillus.</title>
        <authorList>
            <person name="Cole S.T."/>
            <person name="Eiglmeier K."/>
            <person name="Parkhill J."/>
            <person name="James K.D."/>
            <person name="Thomson N.R."/>
            <person name="Wheeler P.R."/>
            <person name="Honore N."/>
            <person name="Garnier T."/>
            <person name="Churcher C.M."/>
            <person name="Harris D.E."/>
            <person name="Mungall K.L."/>
            <person name="Basham D."/>
            <person name="Brown D."/>
            <person name="Chillingworth T."/>
            <person name="Connor R."/>
            <person name="Davies R.M."/>
            <person name="Devlin K."/>
            <person name="Duthoy S."/>
            <person name="Feltwell T."/>
            <person name="Fraser A."/>
            <person name="Hamlin N."/>
            <person name="Holroyd S."/>
            <person name="Hornsby T."/>
            <person name="Jagels K."/>
            <person name="Lacroix C."/>
            <person name="Maclean J."/>
            <person name="Moule S."/>
            <person name="Murphy L.D."/>
            <person name="Oliver K."/>
            <person name="Quail M.A."/>
            <person name="Rajandream M.A."/>
            <person name="Rutherford K.M."/>
            <person name="Rutter S."/>
            <person name="Seeger K."/>
            <person name="Simon S."/>
            <person name="Simmonds M."/>
            <person name="Skelton J."/>
            <person name="Squares R."/>
            <person name="Squares S."/>
            <person name="Stevens K."/>
            <person name="Taylor K."/>
            <person name="Whitehead S."/>
            <person name="Woodward J.R."/>
            <person name="Barrell B.G."/>
        </authorList>
    </citation>
    <scope>NUCLEOTIDE SEQUENCE [LARGE SCALE GENOMIC DNA]</scope>
    <source>
        <strain>TN</strain>
    </source>
</reference>
<feature type="chain" id="PRO_0000310716" description="Multifunctional 2-oxoglutarate metabolism enzyme">
    <location>
        <begin position="1"/>
        <end position="1238"/>
    </location>
</feature>
<feature type="region of interest" description="2-oxoglutarate dehydrogenase E1, N-terminal part">
    <location>
        <begin position="1"/>
        <end position="41"/>
    </location>
</feature>
<feature type="region of interest" description="Linker">
    <location>
        <begin position="42"/>
        <end position="97"/>
    </location>
</feature>
<feature type="region of interest" description="Disordered" evidence="4">
    <location>
        <begin position="44"/>
        <end position="108"/>
    </location>
</feature>
<feature type="region of interest" description="Succinyltransferase E2">
    <location>
        <begin position="98"/>
        <end position="346"/>
    </location>
</feature>
<feature type="region of interest" description="2-oxoglutarate dehydrogenase E1, C-terminal part">
    <location>
        <begin position="347"/>
        <end position="1238"/>
    </location>
</feature>
<feature type="coiled-coil region" evidence="3">
    <location>
        <begin position="795"/>
        <end position="825"/>
    </location>
</feature>
<feature type="compositionally biased region" description="Low complexity" evidence="4">
    <location>
        <begin position="59"/>
        <end position="107"/>
    </location>
</feature>
<feature type="active site" description="Proton acceptor; for succinyltransferase activity" evidence="1">
    <location>
        <position position="325"/>
    </location>
</feature>
<feature type="binding site" evidence="2">
    <location>
        <position position="551"/>
    </location>
    <ligand>
        <name>thiamine diphosphate</name>
        <dbReference type="ChEBI" id="CHEBI:58937"/>
    </ligand>
</feature>
<feature type="binding site" evidence="2">
    <location>
        <position position="590"/>
    </location>
    <ligand>
        <name>2-oxoglutarate</name>
        <dbReference type="ChEBI" id="CHEBI:16810"/>
    </ligand>
</feature>
<feature type="binding site" evidence="2">
    <location>
        <position position="615"/>
    </location>
    <ligand>
        <name>2-oxoglutarate</name>
        <dbReference type="ChEBI" id="CHEBI:16810"/>
    </ligand>
</feature>
<feature type="binding site" evidence="2">
    <location>
        <position position="615"/>
    </location>
    <ligand>
        <name>thiamine diphosphate</name>
        <dbReference type="ChEBI" id="CHEBI:58937"/>
    </ligand>
</feature>
<feature type="binding site" evidence="2">
    <location>
        <position position="617"/>
    </location>
    <ligand>
        <name>thiamine diphosphate</name>
        <dbReference type="ChEBI" id="CHEBI:58937"/>
    </ligand>
</feature>
<feature type="binding site" evidence="2">
    <location>
        <position position="657"/>
    </location>
    <ligand>
        <name>Mg(2+)</name>
        <dbReference type="ChEBI" id="CHEBI:18420"/>
    </ligand>
</feature>
<feature type="binding site" evidence="2">
    <location>
        <position position="657"/>
    </location>
    <ligand>
        <name>thiamine diphosphate</name>
        <dbReference type="ChEBI" id="CHEBI:58937"/>
    </ligand>
</feature>
<feature type="binding site" evidence="2">
    <location>
        <position position="658"/>
    </location>
    <ligand>
        <name>thiamine diphosphate</name>
        <dbReference type="ChEBI" id="CHEBI:58937"/>
    </ligand>
</feature>
<feature type="binding site" evidence="2">
    <location>
        <position position="659"/>
    </location>
    <ligand>
        <name>thiamine diphosphate</name>
        <dbReference type="ChEBI" id="CHEBI:58937"/>
    </ligand>
</feature>
<feature type="binding site" evidence="2">
    <location>
        <position position="690"/>
    </location>
    <ligand>
        <name>Mg(2+)</name>
        <dbReference type="ChEBI" id="CHEBI:18420"/>
    </ligand>
</feature>
<feature type="binding site" evidence="2">
    <location>
        <position position="690"/>
    </location>
    <ligand>
        <name>thiamine diphosphate</name>
        <dbReference type="ChEBI" id="CHEBI:58937"/>
    </ligand>
</feature>
<feature type="binding site" evidence="2">
    <location>
        <position position="692"/>
    </location>
    <ligand>
        <name>Mg(2+)</name>
        <dbReference type="ChEBI" id="CHEBI:18420"/>
    </ligand>
</feature>
<feature type="binding site" evidence="2">
    <location>
        <position position="1032"/>
    </location>
    <ligand>
        <name>2-oxoglutarate</name>
        <dbReference type="ChEBI" id="CHEBI:16810"/>
    </ligand>
</feature>
<feature type="binding site" evidence="2">
    <location>
        <position position="1050"/>
    </location>
    <ligand>
        <name>acetyl-CoA</name>
        <dbReference type="ChEBI" id="CHEBI:57288"/>
        <note>allosteric activator</note>
    </ligand>
</feature>
<feature type="binding site" evidence="2">
    <location>
        <position position="1066"/>
    </location>
    <ligand>
        <name>acetyl-CoA</name>
        <dbReference type="ChEBI" id="CHEBI:57288"/>
        <note>allosteric activator</note>
    </ligand>
</feature>
<feature type="binding site" evidence="2">
    <location>
        <position position="1101"/>
    </location>
    <ligand>
        <name>acetyl-CoA</name>
        <dbReference type="ChEBI" id="CHEBI:57288"/>
        <note>allosteric activator</note>
    </ligand>
</feature>
<feature type="binding site" evidence="2">
    <location>
        <position position="1104"/>
    </location>
    <ligand>
        <name>acetyl-CoA</name>
        <dbReference type="ChEBI" id="CHEBI:57288"/>
        <note>allosteric activator</note>
    </ligand>
</feature>
<feature type="binding site" evidence="2">
    <location>
        <position position="1154"/>
    </location>
    <ligand>
        <name>acetyl-CoA</name>
        <dbReference type="ChEBI" id="CHEBI:57288"/>
        <note>allosteric activator</note>
    </ligand>
</feature>
<feature type="binding site" evidence="2">
    <location>
        <position position="1161"/>
    </location>
    <ligand>
        <name>acetyl-CoA</name>
        <dbReference type="ChEBI" id="CHEBI:57288"/>
        <note>allosteric activator</note>
    </ligand>
</feature>
<feature type="binding site" evidence="2">
    <location>
        <position position="1162"/>
    </location>
    <ligand>
        <name>acetyl-CoA</name>
        <dbReference type="ChEBI" id="CHEBI:57288"/>
        <note>allosteric activator</note>
    </ligand>
</feature>
<comment type="function">
    <text evidence="1">Shows three enzymatic activities that share a first common step, the attack of thiamine-PP on 2-oxoglutarate (alpha-ketoglutarate, KG), leading to the formation of an enamine-thiamine-PP intermediate upon decarboxylation. Thus, displays KGD activity, catalyzing the decarboxylation from five-carbon 2-oxoglutarate to four-carbon succinate semialdehyde (SSA). Also catalyzes C-C bond formation between the activated aldehyde formed after decarboxylation of alpha-ketoglutarate and the carbonyl of glyoxylate (GLX), to yield 2-hydroxy-3-oxoadipate (HOA), which spontaneously decarboxylates to form 5-hydroxylevulinate (HLA). And is also a component of the 2-oxoglutarate dehydrogenase (ODH) complex, that catalyzes the overall conversion of 2-oxoglutarate to succinyl-CoA and CO(2). The KG decarboxylase and KG dehydrogenase reactions provide two alternative, tightly regulated, pathways connecting the oxidative and reductive branches of the TCA cycle (By similarity).</text>
</comment>
<comment type="catalytic activity">
    <reaction>
        <text>glyoxylate + 2-oxoglutarate + H(+) = 2-hydroxy-3-oxoadipate + CO2</text>
        <dbReference type="Rhea" id="RHEA:14341"/>
        <dbReference type="ChEBI" id="CHEBI:15378"/>
        <dbReference type="ChEBI" id="CHEBI:16526"/>
        <dbReference type="ChEBI" id="CHEBI:16810"/>
        <dbReference type="ChEBI" id="CHEBI:36655"/>
        <dbReference type="ChEBI" id="CHEBI:57712"/>
        <dbReference type="EC" id="2.2.1.5"/>
    </reaction>
</comment>
<comment type="catalytic activity">
    <reaction>
        <text>2-oxoglutarate + H(+) = succinate semialdehyde + CO2</text>
        <dbReference type="Rhea" id="RHEA:10524"/>
        <dbReference type="ChEBI" id="CHEBI:15378"/>
        <dbReference type="ChEBI" id="CHEBI:16526"/>
        <dbReference type="ChEBI" id="CHEBI:16810"/>
        <dbReference type="ChEBI" id="CHEBI:57706"/>
        <dbReference type="EC" id="4.1.1.71"/>
    </reaction>
</comment>
<comment type="catalytic activity">
    <reaction>
        <text>N(6)-[(R)-lipoyl]-L-lysyl-[protein] + 2-oxoglutarate + H(+) = N(6)-[(R)-S(8)-succinyldihydrolipoyl]-L-lysyl-[protein] + CO2</text>
        <dbReference type="Rhea" id="RHEA:12188"/>
        <dbReference type="Rhea" id="RHEA-COMP:10474"/>
        <dbReference type="Rhea" id="RHEA-COMP:20092"/>
        <dbReference type="ChEBI" id="CHEBI:15378"/>
        <dbReference type="ChEBI" id="CHEBI:16526"/>
        <dbReference type="ChEBI" id="CHEBI:16810"/>
        <dbReference type="ChEBI" id="CHEBI:83099"/>
        <dbReference type="ChEBI" id="CHEBI:83120"/>
        <dbReference type="EC" id="1.2.4.2"/>
    </reaction>
</comment>
<comment type="catalytic activity">
    <reaction>
        <text>N(6)-[(R)-dihydrolipoyl]-L-lysyl-[protein] + succinyl-CoA = N(6)-[(R)-S(8)-succinyldihydrolipoyl]-L-lysyl-[protein] + CoA</text>
        <dbReference type="Rhea" id="RHEA:15213"/>
        <dbReference type="Rhea" id="RHEA-COMP:10475"/>
        <dbReference type="Rhea" id="RHEA-COMP:20092"/>
        <dbReference type="ChEBI" id="CHEBI:57287"/>
        <dbReference type="ChEBI" id="CHEBI:57292"/>
        <dbReference type="ChEBI" id="CHEBI:83100"/>
        <dbReference type="ChEBI" id="CHEBI:83120"/>
        <dbReference type="EC" id="2.3.1.61"/>
    </reaction>
</comment>
<comment type="cofactor">
    <cofactor evidence="1">
        <name>Mg(2+)</name>
        <dbReference type="ChEBI" id="CHEBI:18420"/>
    </cofactor>
</comment>
<comment type="cofactor">
    <cofactor evidence="1">
        <name>thiamine diphosphate</name>
        <dbReference type="ChEBI" id="CHEBI:58937"/>
    </cofactor>
</comment>
<comment type="activity regulation">
    <text evidence="1">Alpha-ketoglutarate dehydrogenase and decarboxylase activities are inhibited by unphosphorylated GarA, and allosterically activated by acetyl-CoA, the main substrate of the TCA cycle.</text>
</comment>
<comment type="pathway">
    <text>Carbohydrate metabolism; tricarboxylic acid cycle; succinate from 2-oxoglutarate (transferase route): step 1/2.</text>
</comment>
<comment type="pathway">
    <text>Carbohydrate metabolism; tricarboxylic acid cycle; succinyl-CoA from 2-oxoglutarate (dehydrogenase route): step 1/1.</text>
</comment>
<comment type="subunit">
    <text evidence="1">Homodimer. The 2-oxoglutarate dehydrogenase (ODH) complex contains multiple copies of three enzymatic components: 2-oxoglutarate dehydrogenase (E1), dihydrolipoamide succinyltransferase (E2) and lipoamide dehydrogenase (E3) (By similarity).</text>
</comment>
<comment type="domain">
    <text evidence="1">Is a fusion protein with two major domains exhibiting structural features of an E1 and E2 protein, and a short sequence stretch of E1 localized at the N-terminus, which is connected by a linker region to the rest of the protein.</text>
</comment>
<comment type="similarity">
    <text evidence="5">Belongs to the 2-oxoacid dehydrogenase family. Kgd subfamily.</text>
</comment>
<comment type="sequence caution" evidence="5">
    <conflict type="erroneous initiation">
        <sequence resource="EMBL-CDS" id="CAC31476"/>
    </conflict>
</comment>
<keyword id="KW-0012">Acyltransferase</keyword>
<keyword id="KW-0021">Allosteric enzyme</keyword>
<keyword id="KW-0175">Coiled coil</keyword>
<keyword id="KW-0210">Decarboxylase</keyword>
<keyword id="KW-0456">Lyase</keyword>
<keyword id="KW-0460">Magnesium</keyword>
<keyword id="KW-0479">Metal-binding</keyword>
<keyword id="KW-0511">Multifunctional enzyme</keyword>
<keyword id="KW-0560">Oxidoreductase</keyword>
<keyword id="KW-1185">Reference proteome</keyword>
<keyword id="KW-0786">Thiamine pyrophosphate</keyword>
<keyword id="KW-0808">Transferase</keyword>
<keyword id="KW-0816">Tricarboxylic acid cycle</keyword>
<proteinExistence type="inferred from homology"/>